<name>MSRA_AZOVD</name>
<proteinExistence type="inferred from homology"/>
<gene>
    <name evidence="1" type="primary">msrA</name>
    <name type="ordered locus">Avin_44940</name>
</gene>
<keyword id="KW-0560">Oxidoreductase</keyword>
<dbReference type="EC" id="1.8.4.11" evidence="1"/>
<dbReference type="EMBL" id="CP001157">
    <property type="protein sequence ID" value="ACO80611.1"/>
    <property type="molecule type" value="Genomic_DNA"/>
</dbReference>
<dbReference type="RefSeq" id="WP_012702978.1">
    <property type="nucleotide sequence ID" value="NC_012560.1"/>
</dbReference>
<dbReference type="SMR" id="C1DGW5"/>
<dbReference type="STRING" id="322710.Avin_44940"/>
<dbReference type="EnsemblBacteria" id="ACO80611">
    <property type="protein sequence ID" value="ACO80611"/>
    <property type="gene ID" value="Avin_44940"/>
</dbReference>
<dbReference type="GeneID" id="88187383"/>
<dbReference type="KEGG" id="avn:Avin_44940"/>
<dbReference type="eggNOG" id="COG0225">
    <property type="taxonomic scope" value="Bacteria"/>
</dbReference>
<dbReference type="HOGENOM" id="CLU_031040_10_3_6"/>
<dbReference type="OrthoDB" id="4174719at2"/>
<dbReference type="Proteomes" id="UP000002424">
    <property type="component" value="Chromosome"/>
</dbReference>
<dbReference type="GO" id="GO:0005737">
    <property type="term" value="C:cytoplasm"/>
    <property type="evidence" value="ECO:0007669"/>
    <property type="project" value="TreeGrafter"/>
</dbReference>
<dbReference type="GO" id="GO:0036456">
    <property type="term" value="F:L-methionine-(S)-S-oxide reductase activity"/>
    <property type="evidence" value="ECO:0007669"/>
    <property type="project" value="TreeGrafter"/>
</dbReference>
<dbReference type="GO" id="GO:0008113">
    <property type="term" value="F:peptide-methionine (S)-S-oxide reductase activity"/>
    <property type="evidence" value="ECO:0007669"/>
    <property type="project" value="UniProtKB-UniRule"/>
</dbReference>
<dbReference type="GO" id="GO:0034599">
    <property type="term" value="P:cellular response to oxidative stress"/>
    <property type="evidence" value="ECO:0007669"/>
    <property type="project" value="TreeGrafter"/>
</dbReference>
<dbReference type="GO" id="GO:0036211">
    <property type="term" value="P:protein modification process"/>
    <property type="evidence" value="ECO:0007669"/>
    <property type="project" value="UniProtKB-UniRule"/>
</dbReference>
<dbReference type="FunFam" id="3.30.1060.10:FF:000001">
    <property type="entry name" value="Peptide methionine sulfoxide reductase MsrA"/>
    <property type="match status" value="1"/>
</dbReference>
<dbReference type="Gene3D" id="3.30.1060.10">
    <property type="entry name" value="Peptide methionine sulphoxide reductase MsrA"/>
    <property type="match status" value="1"/>
</dbReference>
<dbReference type="HAMAP" id="MF_01401">
    <property type="entry name" value="MsrA"/>
    <property type="match status" value="1"/>
</dbReference>
<dbReference type="InterPro" id="IPR002569">
    <property type="entry name" value="Met_Sox_Rdtase_MsrA_dom"/>
</dbReference>
<dbReference type="InterPro" id="IPR036509">
    <property type="entry name" value="Met_Sox_Rdtase_MsrA_sf"/>
</dbReference>
<dbReference type="InterPro" id="IPR050162">
    <property type="entry name" value="MsrA_MetSO_reductase"/>
</dbReference>
<dbReference type="NCBIfam" id="TIGR00401">
    <property type="entry name" value="msrA"/>
    <property type="match status" value="1"/>
</dbReference>
<dbReference type="PANTHER" id="PTHR42799">
    <property type="entry name" value="MITOCHONDRIAL PEPTIDE METHIONINE SULFOXIDE REDUCTASE"/>
    <property type="match status" value="1"/>
</dbReference>
<dbReference type="PANTHER" id="PTHR42799:SF2">
    <property type="entry name" value="MITOCHONDRIAL PEPTIDE METHIONINE SULFOXIDE REDUCTASE"/>
    <property type="match status" value="1"/>
</dbReference>
<dbReference type="Pfam" id="PF01625">
    <property type="entry name" value="PMSR"/>
    <property type="match status" value="1"/>
</dbReference>
<dbReference type="SUPFAM" id="SSF55068">
    <property type="entry name" value="Peptide methionine sulfoxide reductase"/>
    <property type="match status" value="1"/>
</dbReference>
<protein>
    <recommendedName>
        <fullName evidence="1">Peptide methionine sulfoxide reductase MsrA</fullName>
        <shortName evidence="1">Protein-methionine-S-oxide reductase</shortName>
        <ecNumber evidence="1">1.8.4.11</ecNumber>
    </recommendedName>
    <alternativeName>
        <fullName evidence="1">Peptide-methionine (S)-S-oxide reductase</fullName>
        <shortName evidence="1">Peptide Met(O) reductase</shortName>
    </alternativeName>
</protein>
<feature type="chain" id="PRO_1000215184" description="Peptide methionine sulfoxide reductase MsrA">
    <location>
        <begin position="1"/>
        <end position="216"/>
    </location>
</feature>
<feature type="active site" evidence="1">
    <location>
        <position position="58"/>
    </location>
</feature>
<accession>C1DGW5</accession>
<reference key="1">
    <citation type="journal article" date="2009" name="J. Bacteriol.">
        <title>Genome sequence of Azotobacter vinelandii, an obligate aerobe specialized to support diverse anaerobic metabolic processes.</title>
        <authorList>
            <person name="Setubal J.C."/>
            <person name="Dos Santos P."/>
            <person name="Goldman B.S."/>
            <person name="Ertesvaag H."/>
            <person name="Espin G."/>
            <person name="Rubio L.M."/>
            <person name="Valla S."/>
            <person name="Almeida N.F."/>
            <person name="Balasubramanian D."/>
            <person name="Cromes L."/>
            <person name="Curatti L."/>
            <person name="Du Z."/>
            <person name="Godsy E."/>
            <person name="Goodner B."/>
            <person name="Hellner-Burris K."/>
            <person name="Hernandez J.A."/>
            <person name="Houmiel K."/>
            <person name="Imperial J."/>
            <person name="Kennedy C."/>
            <person name="Larson T.J."/>
            <person name="Latreille P."/>
            <person name="Ligon L.S."/>
            <person name="Lu J."/>
            <person name="Maerk M."/>
            <person name="Miller N.M."/>
            <person name="Norton S."/>
            <person name="O'Carroll I.P."/>
            <person name="Paulsen I."/>
            <person name="Raulfs E.C."/>
            <person name="Roemer R."/>
            <person name="Rosser J."/>
            <person name="Segura D."/>
            <person name="Slater S."/>
            <person name="Stricklin S.L."/>
            <person name="Studholme D.J."/>
            <person name="Sun J."/>
            <person name="Viana C.J."/>
            <person name="Wallin E."/>
            <person name="Wang B."/>
            <person name="Wheeler C."/>
            <person name="Zhu H."/>
            <person name="Dean D.R."/>
            <person name="Dixon R."/>
            <person name="Wood D."/>
        </authorList>
    </citation>
    <scope>NUCLEOTIDE SEQUENCE [LARGE SCALE GENOMIC DNA]</scope>
    <source>
        <strain>DJ / ATCC BAA-1303</strain>
    </source>
</reference>
<sequence>MVLRSQIPAHELALPDPARALPGRAEAMPVPAAHYVNGHPLKPPFPAGMRQALFGLGCFWGAERRFWQQPGVWTTAVGYAGGLTPNPTYEEVCSGLTGHTEVVLVVFDPQETDYRTLLKVFWEIHDPTQGMRQGNDIGTQYRSAIYCFDASQRASAEASRERFQAELAKAGYGPVTTEIADAPPFYYAEDYHQQYLAKNPGGYCGLGGTGVCLPPA</sequence>
<organism>
    <name type="scientific">Azotobacter vinelandii (strain DJ / ATCC BAA-1303)</name>
    <dbReference type="NCBI Taxonomy" id="322710"/>
    <lineage>
        <taxon>Bacteria</taxon>
        <taxon>Pseudomonadati</taxon>
        <taxon>Pseudomonadota</taxon>
        <taxon>Gammaproteobacteria</taxon>
        <taxon>Pseudomonadales</taxon>
        <taxon>Pseudomonadaceae</taxon>
        <taxon>Azotobacter</taxon>
    </lineage>
</organism>
<comment type="function">
    <text evidence="1">Has an important function as a repair enzyme for proteins that have been inactivated by oxidation. Catalyzes the reversible oxidation-reduction of methionine sulfoxide in proteins to methionine.</text>
</comment>
<comment type="catalytic activity">
    <reaction evidence="1">
        <text>L-methionyl-[protein] + [thioredoxin]-disulfide + H2O = L-methionyl-(S)-S-oxide-[protein] + [thioredoxin]-dithiol</text>
        <dbReference type="Rhea" id="RHEA:14217"/>
        <dbReference type="Rhea" id="RHEA-COMP:10698"/>
        <dbReference type="Rhea" id="RHEA-COMP:10700"/>
        <dbReference type="Rhea" id="RHEA-COMP:12313"/>
        <dbReference type="Rhea" id="RHEA-COMP:12315"/>
        <dbReference type="ChEBI" id="CHEBI:15377"/>
        <dbReference type="ChEBI" id="CHEBI:16044"/>
        <dbReference type="ChEBI" id="CHEBI:29950"/>
        <dbReference type="ChEBI" id="CHEBI:44120"/>
        <dbReference type="ChEBI" id="CHEBI:50058"/>
        <dbReference type="EC" id="1.8.4.11"/>
    </reaction>
</comment>
<comment type="catalytic activity">
    <reaction evidence="1">
        <text>[thioredoxin]-disulfide + L-methionine + H2O = L-methionine (S)-S-oxide + [thioredoxin]-dithiol</text>
        <dbReference type="Rhea" id="RHEA:19993"/>
        <dbReference type="Rhea" id="RHEA-COMP:10698"/>
        <dbReference type="Rhea" id="RHEA-COMP:10700"/>
        <dbReference type="ChEBI" id="CHEBI:15377"/>
        <dbReference type="ChEBI" id="CHEBI:29950"/>
        <dbReference type="ChEBI" id="CHEBI:50058"/>
        <dbReference type="ChEBI" id="CHEBI:57844"/>
        <dbReference type="ChEBI" id="CHEBI:58772"/>
        <dbReference type="EC" id="1.8.4.11"/>
    </reaction>
</comment>
<comment type="similarity">
    <text evidence="1">Belongs to the MsrA Met sulfoxide reductase family.</text>
</comment>
<evidence type="ECO:0000255" key="1">
    <source>
        <dbReference type="HAMAP-Rule" id="MF_01401"/>
    </source>
</evidence>